<accession>Q73G61</accession>
<sequence length="326" mass="36491">MILATKVFFTSFVFGFILFPYFIKLLKKISKDGQPIRSCGPESHLITKKNVPPMGGIIILISSLLPILLWAQLTPEILLLILITLFFALLGFIDDYLKLKTNHYRGLSAKTKILIQFIVALVGVFILKLYSAECFTKTSLFKGVIIDFGYLYVPFAAFVIVGSSNAVNLTDGLDGLAATQVITSFAFLGLIAYITQADMNITLFCIAFIGAILSFLWFNTHPAKIFMGDVGSLSVGAALGLTSVLIKREMLFAIIGIIFVIETLSVIIQISYFKYTKFKYGEGKRVFLMAPIHHHFEKKRWSENVIVMKFWIISIICSVFTITFLL</sequence>
<organism>
    <name type="scientific">Wolbachia pipientis wMel</name>
    <dbReference type="NCBI Taxonomy" id="163164"/>
    <lineage>
        <taxon>Bacteria</taxon>
        <taxon>Pseudomonadati</taxon>
        <taxon>Pseudomonadota</taxon>
        <taxon>Alphaproteobacteria</taxon>
        <taxon>Rickettsiales</taxon>
        <taxon>Anaplasmataceae</taxon>
        <taxon>Wolbachieae</taxon>
        <taxon>Wolbachia</taxon>
    </lineage>
</organism>
<evidence type="ECO:0000255" key="1">
    <source>
        <dbReference type="HAMAP-Rule" id="MF_00038"/>
    </source>
</evidence>
<protein>
    <recommendedName>
        <fullName evidence="1">Phospho-N-acetylmuramoyl-pentapeptide-transferase</fullName>
        <ecNumber evidence="1">2.7.8.13</ecNumber>
    </recommendedName>
    <alternativeName>
        <fullName evidence="1">UDP-MurNAc-pentapeptide phosphotransferase</fullName>
    </alternativeName>
</protein>
<comment type="function">
    <text evidence="1">Catalyzes the initial step of the lipid cycle reactions in the biosynthesis of the cell wall peptidoglycan: transfers peptidoglycan precursor phospho-MurNAc-pentapeptide from UDP-MurNAc-pentapeptide onto the lipid carrier undecaprenyl phosphate, yielding undecaprenyl-pyrophosphoryl-MurNAc-pentapeptide, known as lipid I.</text>
</comment>
<comment type="catalytic activity">
    <reaction evidence="1">
        <text>UDP-N-acetyl-alpha-D-muramoyl-L-alanyl-gamma-D-glutamyl-meso-2,6-diaminopimeloyl-D-alanyl-D-alanine + di-trans,octa-cis-undecaprenyl phosphate = di-trans,octa-cis-undecaprenyl diphospho-N-acetyl-alpha-D-muramoyl-L-alanyl-D-glutamyl-meso-2,6-diaminopimeloyl-D-alanyl-D-alanine + UMP</text>
        <dbReference type="Rhea" id="RHEA:28386"/>
        <dbReference type="ChEBI" id="CHEBI:57865"/>
        <dbReference type="ChEBI" id="CHEBI:60392"/>
        <dbReference type="ChEBI" id="CHEBI:61386"/>
        <dbReference type="ChEBI" id="CHEBI:61387"/>
        <dbReference type="EC" id="2.7.8.13"/>
    </reaction>
</comment>
<comment type="cofactor">
    <cofactor evidence="1">
        <name>Mg(2+)</name>
        <dbReference type="ChEBI" id="CHEBI:18420"/>
    </cofactor>
</comment>
<comment type="pathway">
    <text evidence="1">Cell wall biogenesis; peptidoglycan biosynthesis.</text>
</comment>
<comment type="subcellular location">
    <subcellularLocation>
        <location evidence="1">Cell membrane</location>
        <topology evidence="1">Multi-pass membrane protein</topology>
    </subcellularLocation>
</comment>
<comment type="similarity">
    <text evidence="1">Belongs to the glycosyltransferase 4 family. MraY subfamily.</text>
</comment>
<gene>
    <name evidence="1" type="primary">mraY</name>
    <name type="ordered locus">WD_1102</name>
</gene>
<dbReference type="EC" id="2.7.8.13" evidence="1"/>
<dbReference type="EMBL" id="AE017196">
    <property type="protein sequence ID" value="AAS14756.1"/>
    <property type="molecule type" value="Genomic_DNA"/>
</dbReference>
<dbReference type="RefSeq" id="WP_010963043.1">
    <property type="nucleotide sequence ID" value="NZ_OX384529.1"/>
</dbReference>
<dbReference type="SMR" id="Q73G61"/>
<dbReference type="EnsemblBacteria" id="AAS14756">
    <property type="protein sequence ID" value="AAS14756"/>
    <property type="gene ID" value="WD_1102"/>
</dbReference>
<dbReference type="GeneID" id="70036574"/>
<dbReference type="KEGG" id="wol:WD_1102"/>
<dbReference type="eggNOG" id="COG0472">
    <property type="taxonomic scope" value="Bacteria"/>
</dbReference>
<dbReference type="UniPathway" id="UPA00219"/>
<dbReference type="Proteomes" id="UP000008215">
    <property type="component" value="Chromosome"/>
</dbReference>
<dbReference type="GO" id="GO:0005886">
    <property type="term" value="C:plasma membrane"/>
    <property type="evidence" value="ECO:0007669"/>
    <property type="project" value="UniProtKB-SubCell"/>
</dbReference>
<dbReference type="GO" id="GO:0046872">
    <property type="term" value="F:metal ion binding"/>
    <property type="evidence" value="ECO:0007669"/>
    <property type="project" value="UniProtKB-KW"/>
</dbReference>
<dbReference type="GO" id="GO:0008963">
    <property type="term" value="F:phospho-N-acetylmuramoyl-pentapeptide-transferase activity"/>
    <property type="evidence" value="ECO:0007669"/>
    <property type="project" value="UniProtKB-UniRule"/>
</dbReference>
<dbReference type="GO" id="GO:0051992">
    <property type="term" value="F:UDP-N-acetylmuramoyl-L-alanyl-D-glutamyl-meso-2,6-diaminopimelyl-D-alanyl-D-alanine:undecaprenyl-phosphate transferase activity"/>
    <property type="evidence" value="ECO:0007669"/>
    <property type="project" value="RHEA"/>
</dbReference>
<dbReference type="GO" id="GO:0051301">
    <property type="term" value="P:cell division"/>
    <property type="evidence" value="ECO:0007669"/>
    <property type="project" value="UniProtKB-KW"/>
</dbReference>
<dbReference type="GO" id="GO:0071555">
    <property type="term" value="P:cell wall organization"/>
    <property type="evidence" value="ECO:0007669"/>
    <property type="project" value="UniProtKB-KW"/>
</dbReference>
<dbReference type="GO" id="GO:0009252">
    <property type="term" value="P:peptidoglycan biosynthetic process"/>
    <property type="evidence" value="ECO:0007669"/>
    <property type="project" value="UniProtKB-UniRule"/>
</dbReference>
<dbReference type="GO" id="GO:0008360">
    <property type="term" value="P:regulation of cell shape"/>
    <property type="evidence" value="ECO:0007669"/>
    <property type="project" value="UniProtKB-KW"/>
</dbReference>
<dbReference type="CDD" id="cd06852">
    <property type="entry name" value="GT_MraY"/>
    <property type="match status" value="1"/>
</dbReference>
<dbReference type="HAMAP" id="MF_00038">
    <property type="entry name" value="MraY"/>
    <property type="match status" value="1"/>
</dbReference>
<dbReference type="InterPro" id="IPR000715">
    <property type="entry name" value="Glycosyl_transferase_4"/>
</dbReference>
<dbReference type="InterPro" id="IPR003524">
    <property type="entry name" value="PNAcMuramoyl-5peptid_Trfase"/>
</dbReference>
<dbReference type="InterPro" id="IPR018480">
    <property type="entry name" value="PNAcMuramoyl-5peptid_Trfase_CS"/>
</dbReference>
<dbReference type="NCBIfam" id="TIGR00445">
    <property type="entry name" value="mraY"/>
    <property type="match status" value="1"/>
</dbReference>
<dbReference type="PANTHER" id="PTHR22926">
    <property type="entry name" value="PHOSPHO-N-ACETYLMURAMOYL-PENTAPEPTIDE-TRANSFERASE"/>
    <property type="match status" value="1"/>
</dbReference>
<dbReference type="PANTHER" id="PTHR22926:SF5">
    <property type="entry name" value="PHOSPHO-N-ACETYLMURAMOYL-PENTAPEPTIDE-TRANSFERASE HOMOLOG"/>
    <property type="match status" value="1"/>
</dbReference>
<dbReference type="Pfam" id="PF00953">
    <property type="entry name" value="Glycos_transf_4"/>
    <property type="match status" value="1"/>
</dbReference>
<dbReference type="PROSITE" id="PS01348">
    <property type="entry name" value="MRAY_2"/>
    <property type="match status" value="1"/>
</dbReference>
<feature type="chain" id="PRO_0000108928" description="Phospho-N-acetylmuramoyl-pentapeptide-transferase">
    <location>
        <begin position="1"/>
        <end position="326"/>
    </location>
</feature>
<feature type="transmembrane region" description="Helical" evidence="1">
    <location>
        <begin position="2"/>
        <end position="22"/>
    </location>
</feature>
<feature type="transmembrane region" description="Helical" evidence="1">
    <location>
        <begin position="51"/>
        <end position="71"/>
    </location>
</feature>
<feature type="transmembrane region" description="Helical" evidence="1">
    <location>
        <begin position="73"/>
        <end position="93"/>
    </location>
</feature>
<feature type="transmembrane region" description="Helical" evidence="1">
    <location>
        <begin position="113"/>
        <end position="133"/>
    </location>
</feature>
<feature type="transmembrane region" description="Helical" evidence="1">
    <location>
        <begin position="143"/>
        <end position="163"/>
    </location>
</feature>
<feature type="transmembrane region" description="Helical" evidence="1">
    <location>
        <begin position="175"/>
        <end position="195"/>
    </location>
</feature>
<feature type="transmembrane region" description="Helical" evidence="1">
    <location>
        <begin position="199"/>
        <end position="219"/>
    </location>
</feature>
<feature type="transmembrane region" description="Helical" evidence="1">
    <location>
        <begin position="225"/>
        <end position="245"/>
    </location>
</feature>
<feature type="transmembrane region" description="Helical" evidence="1">
    <location>
        <begin position="250"/>
        <end position="270"/>
    </location>
</feature>
<feature type="transmembrane region" description="Helical" evidence="1">
    <location>
        <begin position="305"/>
        <end position="325"/>
    </location>
</feature>
<reference key="1">
    <citation type="journal article" date="2004" name="PLoS Biol.">
        <title>Phylogenomics of the reproductive parasite Wolbachia pipientis wMel: a streamlined genome overrun by mobile genetic elements.</title>
        <authorList>
            <person name="Wu M."/>
            <person name="Sun L.V."/>
            <person name="Vamathevan J.J."/>
            <person name="Riegler M."/>
            <person name="DeBoy R.T."/>
            <person name="Brownlie J.C."/>
            <person name="McGraw E.A."/>
            <person name="Martin W."/>
            <person name="Esser C."/>
            <person name="Ahmadinejad N."/>
            <person name="Wiegand C."/>
            <person name="Madupu R."/>
            <person name="Beanan M.J."/>
            <person name="Brinkac L.M."/>
            <person name="Daugherty S.C."/>
            <person name="Durkin A.S."/>
            <person name="Kolonay J.F."/>
            <person name="Nelson W.C."/>
            <person name="Mohamoud Y."/>
            <person name="Lee P."/>
            <person name="Berry K.J."/>
            <person name="Young M.B."/>
            <person name="Utterback T.R."/>
            <person name="Weidman J.F."/>
            <person name="Nierman W.C."/>
            <person name="Paulsen I.T."/>
            <person name="Nelson K.E."/>
            <person name="Tettelin H."/>
            <person name="O'Neill S.L."/>
            <person name="Eisen J.A."/>
        </authorList>
    </citation>
    <scope>NUCLEOTIDE SEQUENCE [LARGE SCALE GENOMIC DNA]</scope>
</reference>
<keyword id="KW-0131">Cell cycle</keyword>
<keyword id="KW-0132">Cell division</keyword>
<keyword id="KW-1003">Cell membrane</keyword>
<keyword id="KW-0133">Cell shape</keyword>
<keyword id="KW-0961">Cell wall biogenesis/degradation</keyword>
<keyword id="KW-0460">Magnesium</keyword>
<keyword id="KW-0472">Membrane</keyword>
<keyword id="KW-0479">Metal-binding</keyword>
<keyword id="KW-0573">Peptidoglycan synthesis</keyword>
<keyword id="KW-0808">Transferase</keyword>
<keyword id="KW-0812">Transmembrane</keyword>
<keyword id="KW-1133">Transmembrane helix</keyword>
<proteinExistence type="inferred from homology"/>
<name>MRAY_WOLPM</name>